<keyword id="KW-1185">Reference proteome</keyword>
<keyword id="KW-0687">Ribonucleoprotein</keyword>
<keyword id="KW-0689">Ribosomal protein</keyword>
<keyword id="KW-0694">RNA-binding</keyword>
<keyword id="KW-0699">rRNA-binding</keyword>
<organism>
    <name type="scientific">Nostoc sp. (strain PCC 7120 / SAG 25.82 / UTEX 2576)</name>
    <dbReference type="NCBI Taxonomy" id="103690"/>
    <lineage>
        <taxon>Bacteria</taxon>
        <taxon>Bacillati</taxon>
        <taxon>Cyanobacteriota</taxon>
        <taxon>Cyanophyceae</taxon>
        <taxon>Nostocales</taxon>
        <taxon>Nostocaceae</taxon>
        <taxon>Nostoc</taxon>
    </lineage>
</organism>
<dbReference type="EMBL" id="BA000019">
    <property type="protein sequence ID" value="BAB75903.1"/>
    <property type="status" value="ALT_INIT"/>
    <property type="molecule type" value="Genomic_DNA"/>
</dbReference>
<dbReference type="PIR" id="AE2331">
    <property type="entry name" value="AE2331"/>
</dbReference>
<dbReference type="SMR" id="Q8YPJ0"/>
<dbReference type="KEGG" id="ana:asl4204"/>
<dbReference type="eggNOG" id="COG0198">
    <property type="taxonomic scope" value="Bacteria"/>
</dbReference>
<dbReference type="Proteomes" id="UP000002483">
    <property type="component" value="Chromosome"/>
</dbReference>
<dbReference type="GO" id="GO:1990904">
    <property type="term" value="C:ribonucleoprotein complex"/>
    <property type="evidence" value="ECO:0007669"/>
    <property type="project" value="UniProtKB-KW"/>
</dbReference>
<dbReference type="GO" id="GO:0005840">
    <property type="term" value="C:ribosome"/>
    <property type="evidence" value="ECO:0007669"/>
    <property type="project" value="UniProtKB-KW"/>
</dbReference>
<dbReference type="GO" id="GO:0019843">
    <property type="term" value="F:rRNA binding"/>
    <property type="evidence" value="ECO:0007669"/>
    <property type="project" value="UniProtKB-UniRule"/>
</dbReference>
<dbReference type="GO" id="GO:0003735">
    <property type="term" value="F:structural constituent of ribosome"/>
    <property type="evidence" value="ECO:0007669"/>
    <property type="project" value="InterPro"/>
</dbReference>
<dbReference type="GO" id="GO:0006412">
    <property type="term" value="P:translation"/>
    <property type="evidence" value="ECO:0007669"/>
    <property type="project" value="UniProtKB-UniRule"/>
</dbReference>
<dbReference type="CDD" id="cd06089">
    <property type="entry name" value="KOW_RPL26"/>
    <property type="match status" value="1"/>
</dbReference>
<dbReference type="Gene3D" id="2.30.30.30">
    <property type="match status" value="2"/>
</dbReference>
<dbReference type="HAMAP" id="MF_01326_B">
    <property type="entry name" value="Ribosomal_uL24_B"/>
    <property type="match status" value="1"/>
</dbReference>
<dbReference type="InterPro" id="IPR005824">
    <property type="entry name" value="KOW"/>
</dbReference>
<dbReference type="InterPro" id="IPR014722">
    <property type="entry name" value="Rib_uL2_dom2"/>
</dbReference>
<dbReference type="InterPro" id="IPR003256">
    <property type="entry name" value="Ribosomal_uL24"/>
</dbReference>
<dbReference type="InterPro" id="IPR005825">
    <property type="entry name" value="Ribosomal_uL24_CS"/>
</dbReference>
<dbReference type="InterPro" id="IPR041988">
    <property type="entry name" value="Ribosomal_uL24_KOW"/>
</dbReference>
<dbReference type="InterPro" id="IPR008991">
    <property type="entry name" value="Translation_prot_SH3-like_sf"/>
</dbReference>
<dbReference type="NCBIfam" id="TIGR01079">
    <property type="entry name" value="rplX_bact"/>
    <property type="match status" value="1"/>
</dbReference>
<dbReference type="PANTHER" id="PTHR12903">
    <property type="entry name" value="MITOCHONDRIAL RIBOSOMAL PROTEIN L24"/>
    <property type="match status" value="1"/>
</dbReference>
<dbReference type="Pfam" id="PF00467">
    <property type="entry name" value="KOW"/>
    <property type="match status" value="1"/>
</dbReference>
<dbReference type="Pfam" id="PF17136">
    <property type="entry name" value="ribosomal_L24"/>
    <property type="match status" value="1"/>
</dbReference>
<dbReference type="SMART" id="SM00739">
    <property type="entry name" value="KOW"/>
    <property type="match status" value="2"/>
</dbReference>
<dbReference type="SUPFAM" id="SSF50104">
    <property type="entry name" value="Translation proteins SH3-like domain"/>
    <property type="match status" value="2"/>
</dbReference>
<dbReference type="PROSITE" id="PS01108">
    <property type="entry name" value="RIBOSOMAL_L24"/>
    <property type="match status" value="1"/>
</dbReference>
<name>RL24_NOSS1</name>
<protein>
    <recommendedName>
        <fullName evidence="1">Large ribosomal subunit protein uL24</fullName>
    </recommendedName>
    <alternativeName>
        <fullName evidence="2">50S ribosomal protein L24</fullName>
    </alternativeName>
</protein>
<sequence>MKKDTTPKFHKLHVKTGDTVQIIAGKDKGKVGEVIKALPQLSKVVVKGVNIKTKQIIAGKDKGKVGEVIKALPQLSKVVVKGVNIKTKHVKPQQEGESGRIVTQEAPIHSSNVMLYSTKQNVASRVCYTFTAEGKKVRKLKKTGEILDN</sequence>
<accession>Q8YPJ0</accession>
<comment type="function">
    <text evidence="1">One of two assembly initiator proteins, it binds directly to the 5'-end of the 23S rRNA, where it nucleates assembly of the 50S subunit.</text>
</comment>
<comment type="function">
    <text evidence="1">One of the proteins that surrounds the polypeptide exit tunnel on the outside of the subunit.</text>
</comment>
<comment type="subunit">
    <text evidence="1">Part of the 50S ribosomal subunit.</text>
</comment>
<comment type="similarity">
    <text evidence="1">Belongs to the universal ribosomal protein uL24 family.</text>
</comment>
<comment type="sequence caution" evidence="2">
    <conflict type="erroneous initiation">
        <sequence resource="EMBL-CDS" id="BAB75903"/>
    </conflict>
</comment>
<evidence type="ECO:0000255" key="1">
    <source>
        <dbReference type="HAMAP-Rule" id="MF_01326"/>
    </source>
</evidence>
<evidence type="ECO:0000305" key="2"/>
<reference key="1">
    <citation type="journal article" date="2001" name="DNA Res.">
        <title>Complete genomic sequence of the filamentous nitrogen-fixing cyanobacterium Anabaena sp. strain PCC 7120.</title>
        <authorList>
            <person name="Kaneko T."/>
            <person name="Nakamura Y."/>
            <person name="Wolk C.P."/>
            <person name="Kuritz T."/>
            <person name="Sasamoto S."/>
            <person name="Watanabe A."/>
            <person name="Iriguchi M."/>
            <person name="Ishikawa A."/>
            <person name="Kawashima K."/>
            <person name="Kimura T."/>
            <person name="Kishida Y."/>
            <person name="Kohara M."/>
            <person name="Matsumoto M."/>
            <person name="Matsuno A."/>
            <person name="Muraki A."/>
            <person name="Nakazaki N."/>
            <person name="Shimpo S."/>
            <person name="Sugimoto M."/>
            <person name="Takazawa M."/>
            <person name="Yamada M."/>
            <person name="Yasuda M."/>
            <person name="Tabata S."/>
        </authorList>
    </citation>
    <scope>NUCLEOTIDE SEQUENCE [LARGE SCALE GENOMIC DNA]</scope>
    <source>
        <strain>PCC 7120 / SAG 25.82 / UTEX 2576</strain>
    </source>
</reference>
<proteinExistence type="inferred from homology"/>
<feature type="chain" id="PRO_0000130616" description="Large ribosomal subunit protein uL24">
    <location>
        <begin position="1"/>
        <end position="149"/>
    </location>
</feature>
<gene>
    <name evidence="1" type="primary">rplX</name>
    <name evidence="1" type="synonym">rpl24</name>
    <name type="ordered locus">asl4204</name>
</gene>